<protein>
    <recommendedName>
        <fullName evidence="1">Clustered mitochondria protein homolog</fullName>
    </recommendedName>
</protein>
<dbReference type="EMBL" id="BC122932">
    <property type="protein sequence ID" value="AAI22933.1"/>
    <property type="molecule type" value="mRNA"/>
</dbReference>
<dbReference type="RefSeq" id="NP_001072577.1">
    <property type="nucleotide sequence ID" value="NM_001079109.2"/>
</dbReference>
<dbReference type="SMR" id="Q0IHW8"/>
<dbReference type="FunCoup" id="Q0IHW8">
    <property type="interactions" value="1631"/>
</dbReference>
<dbReference type="STRING" id="8364.ENSXETP00000037856"/>
<dbReference type="PaxDb" id="8364-ENSXETP00000042036"/>
<dbReference type="GeneID" id="780032"/>
<dbReference type="KEGG" id="xtr:780032"/>
<dbReference type="AGR" id="Xenbase:XB-GENE-5874446"/>
<dbReference type="CTD" id="23277"/>
<dbReference type="Xenbase" id="XB-GENE-5874446">
    <property type="gene designation" value="cluh"/>
</dbReference>
<dbReference type="eggNOG" id="KOG1839">
    <property type="taxonomic scope" value="Eukaryota"/>
</dbReference>
<dbReference type="InParanoid" id="Q0IHW8"/>
<dbReference type="OrthoDB" id="1414216at2759"/>
<dbReference type="Proteomes" id="UP000008143">
    <property type="component" value="Chromosome 2"/>
</dbReference>
<dbReference type="GO" id="GO:0005737">
    <property type="term" value="C:cytoplasm"/>
    <property type="evidence" value="ECO:0000250"/>
    <property type="project" value="UniProtKB"/>
</dbReference>
<dbReference type="GO" id="GO:0003729">
    <property type="term" value="F:mRNA binding"/>
    <property type="evidence" value="ECO:0000250"/>
    <property type="project" value="UniProtKB"/>
</dbReference>
<dbReference type="GO" id="GO:0048312">
    <property type="term" value="P:intracellular distribution of mitochondria"/>
    <property type="evidence" value="ECO:0000250"/>
    <property type="project" value="UniProtKB"/>
</dbReference>
<dbReference type="GO" id="GO:0007005">
    <property type="term" value="P:mitochondrion organization"/>
    <property type="evidence" value="ECO:0000250"/>
    <property type="project" value="UniProtKB"/>
</dbReference>
<dbReference type="CDD" id="cd15466">
    <property type="entry name" value="CLU-central"/>
    <property type="match status" value="1"/>
</dbReference>
<dbReference type="FunFam" id="1.25.40.10:FF:000088">
    <property type="entry name" value="Clustered mitochondria (CluA/CLU1) homolog"/>
    <property type="match status" value="1"/>
</dbReference>
<dbReference type="FunFam" id="3.30.2280.10:FF:000001">
    <property type="entry name" value="Clustered mitochondria (CluA/CLU1) homolog"/>
    <property type="match status" value="1"/>
</dbReference>
<dbReference type="Gene3D" id="3.30.2280.10">
    <property type="entry name" value="Hypothetical protein (hspc210)"/>
    <property type="match status" value="1"/>
</dbReference>
<dbReference type="Gene3D" id="1.25.40.10">
    <property type="entry name" value="Tetratricopeptide repeat domain"/>
    <property type="match status" value="2"/>
</dbReference>
<dbReference type="HAMAP" id="MF_03013">
    <property type="entry name" value="CLU"/>
    <property type="match status" value="1"/>
</dbReference>
<dbReference type="InterPro" id="IPR033646">
    <property type="entry name" value="CLU-central"/>
</dbReference>
<dbReference type="InterPro" id="IPR025697">
    <property type="entry name" value="CLU_dom"/>
</dbReference>
<dbReference type="InterPro" id="IPR028275">
    <property type="entry name" value="CLU_N"/>
</dbReference>
<dbReference type="InterPro" id="IPR027523">
    <property type="entry name" value="CLU_prot"/>
</dbReference>
<dbReference type="InterPro" id="IPR023231">
    <property type="entry name" value="GSKIP_dom_sf"/>
</dbReference>
<dbReference type="InterPro" id="IPR011990">
    <property type="entry name" value="TPR-like_helical_dom_sf"/>
</dbReference>
<dbReference type="PANTHER" id="PTHR12601:SF51">
    <property type="entry name" value="CLUSTERED MITOCHONDRIA PROTEIN HOMOLOG"/>
    <property type="match status" value="1"/>
</dbReference>
<dbReference type="PANTHER" id="PTHR12601">
    <property type="entry name" value="EUKARYOTIC TRANSLATION INITIATION FACTOR 3 SUBUNIT EIF-3"/>
    <property type="match status" value="1"/>
</dbReference>
<dbReference type="Pfam" id="PF13236">
    <property type="entry name" value="CLU"/>
    <property type="match status" value="1"/>
</dbReference>
<dbReference type="Pfam" id="PF15044">
    <property type="entry name" value="CLU_N"/>
    <property type="match status" value="1"/>
</dbReference>
<dbReference type="Pfam" id="PF12807">
    <property type="entry name" value="eIF3_p135"/>
    <property type="match status" value="1"/>
</dbReference>
<dbReference type="Pfam" id="PF13424">
    <property type="entry name" value="TPR_12"/>
    <property type="match status" value="2"/>
</dbReference>
<dbReference type="SUPFAM" id="SSF103107">
    <property type="entry name" value="Hypothetical protein c14orf129, hspc210"/>
    <property type="match status" value="1"/>
</dbReference>
<dbReference type="SUPFAM" id="SSF48452">
    <property type="entry name" value="TPR-like"/>
    <property type="match status" value="2"/>
</dbReference>
<dbReference type="PROSITE" id="PS51823">
    <property type="entry name" value="CLU"/>
    <property type="match status" value="1"/>
</dbReference>
<feature type="chain" id="PRO_0000366375" description="Clustered mitochondria protein homolog">
    <location>
        <begin position="1"/>
        <end position="1296"/>
    </location>
</feature>
<feature type="domain" description="Clu" evidence="2">
    <location>
        <begin position="333"/>
        <end position="575"/>
    </location>
</feature>
<feature type="repeat" description="TPR 1">
    <location>
        <begin position="970"/>
        <end position="1003"/>
    </location>
</feature>
<feature type="repeat" description="TPR 2">
    <location>
        <begin position="1012"/>
        <end position="1045"/>
    </location>
</feature>
<feature type="repeat" description="TPR 3">
    <location>
        <begin position="1096"/>
        <end position="1129"/>
    </location>
</feature>
<feature type="repeat" description="TPR 4">
    <location>
        <begin position="1138"/>
        <end position="1171"/>
    </location>
</feature>
<feature type="region of interest" description="Disordered" evidence="3">
    <location>
        <begin position="1"/>
        <end position="31"/>
    </location>
</feature>
<feature type="region of interest" description="Disordered" evidence="3">
    <location>
        <begin position="1261"/>
        <end position="1296"/>
    </location>
</feature>
<feature type="coiled-coil region" evidence="1">
    <location>
        <begin position="662"/>
        <end position="689"/>
    </location>
</feature>
<feature type="coiled-coil region" evidence="1">
    <location>
        <begin position="1242"/>
        <end position="1274"/>
    </location>
</feature>
<feature type="compositionally biased region" description="Basic and acidic residues" evidence="3">
    <location>
        <begin position="8"/>
        <end position="26"/>
    </location>
</feature>
<feature type="compositionally biased region" description="Basic and acidic residues" evidence="3">
    <location>
        <begin position="1263"/>
        <end position="1276"/>
    </location>
</feature>
<feature type="compositionally biased region" description="Polar residues" evidence="3">
    <location>
        <begin position="1278"/>
        <end position="1296"/>
    </location>
</feature>
<accession>Q0IHW8</accession>
<comment type="function">
    <text evidence="1">mRNA-binding protein involved in proper cytoplasmic distribution of mitochondria. Specifically binds mRNAs of nuclear-encoded mitochondrial proteins in the cytoplasm and regulates transport or translation of these transcripts close to mitochondria, playing a role in mitochondrial biogenesis.</text>
</comment>
<comment type="subcellular location">
    <subcellularLocation>
        <location evidence="1">Cytoplasm</location>
    </subcellularLocation>
    <subcellularLocation>
        <location evidence="1">Cytoplasmic granule</location>
    </subcellularLocation>
</comment>
<comment type="similarity">
    <text evidence="1">Belongs to the CLU family.</text>
</comment>
<name>CLU_XENTR</name>
<reference key="1">
    <citation type="submission" date="2006-09" db="EMBL/GenBank/DDBJ databases">
        <authorList>
            <consortium name="NIH - Xenopus Gene Collection (XGC) project"/>
        </authorList>
    </citation>
    <scope>NUCLEOTIDE SEQUENCE [LARGE SCALE MRNA]</scope>
    <source>
        <tissue>Testis</tissue>
    </source>
</reference>
<evidence type="ECO:0000255" key="1">
    <source>
        <dbReference type="HAMAP-Rule" id="MF_03013"/>
    </source>
</evidence>
<evidence type="ECO:0000255" key="2">
    <source>
        <dbReference type="PROSITE-ProRule" id="PRU01167"/>
    </source>
</evidence>
<evidence type="ECO:0000256" key="3">
    <source>
        <dbReference type="SAM" id="MobiDB-lite"/>
    </source>
</evidence>
<gene>
    <name evidence="1" type="primary">cluh</name>
</gene>
<keyword id="KW-0175">Coiled coil</keyword>
<keyword id="KW-0963">Cytoplasm</keyword>
<keyword id="KW-1185">Reference proteome</keyword>
<keyword id="KW-0677">Repeat</keyword>
<keyword id="KW-0802">TPR repeat</keyword>
<sequence>MTLMNGDGAHEHQAEAEPKQNGHEMGDQTEEGNEQEVIVIQDTGFTVKVQVPGVETFSIQVSPQEMVQEIHQVLMDREDTCHRTCFSLQLDGNVLDNFAELKTIEGFQEGSVLKVVEEPYTVREARIHVRHIRDLLKSLDPSDAFNGVDCNSLSFLSVFTDGDLGDSGKKKKKGNELEQIDCTPPEYILPGSKERPLSPLQPQNKDWKPLQCLKVFTMSGWNPPPGNRKMHGDLMYLYVITMEDRHVSITASTRGFYLNQSTAYNFNPKPANPSFLSHSLVELLNQVSPTFKKNFAALQKKRVQRHPFERIATPFQLYSWTAPQVEHAMDCVRAEDAYTSRLGYEEHIPGQTRDWNEELQTTRELTRKNLPERLLRERAIFKVHSDFTAAATRGAMAVIDGNVMAINPSEETKMQMFIWNNIFFSLGFDVRDHYKDFGGDSAAYVSPTNDLNGVRAYNAVDVEGLYTLGTVVVDYRGYRVTAQSIIPGILEREQEQSVIYGSIDFGKTVVSHPKYLELLEKTSRPLKIQKHTVLNDKDEEVELCSSVECKGIIGNDGRHYILDLLRTFPPDLNFLPVEGETMPEECTKMGFPKEHRHKLCCLRQELVDAFVEHRYLLFMKLAAMHLMQQKASIKDVLGTEASTASEQLEGNGPSEEKEDLDLDGEAQLKQLEETMAAHKETVDTRSKEVILKACQAVGSISNTSFDIRFNPDIFSPGVRFPNESQEEVQNQKQLLKDAAAFVLTCQIPCLIKDCLDHSVVPMDGTTLAEAMHQRGINMRYLGKVIDVVRKFPVPSQLDHIYKILISEVITRSAKHIFKTYLQGVELSALSAAISHFLNCFLSSFPNSVAHLQSDELVSKKKSKKRRNRNLGNTDNTAWANTSPQELWKNICSEAKSYFDFNLECENVDQAMEVYNLQKISLLREICIKVGIQILLKEYNFDSKHKPTFTEEDILNIFPVVKHVNPKATDAFHFFQSGQAKVQQGYLKEGCELINEALNLFNNVYGAMHVEICACLRLLARLNYIMGDYSEALSNQQKAVLMSERIQGVEHPSTVQEYMHLALYCFANNQVSTSLNLLYRARYLMPLVYGEGHPEMALLDSNIGLVLHGVMEYDLSLRFLENALTINSKYHGVKSLKVALSHHLVARVYETKGEFRSALQHEKDGYTIYKNQLGEQHEKTRESSEYLKYLTQQAVALQRTMNEIYKNGSNANIMPLKFTAPSMTSVLEQLNIINGILFIPLSQKDLEHLKAEVQRRQQLQEAIKGAENHEAKTKEPEMSETSDSNINAASVAPESSD</sequence>
<organism>
    <name type="scientific">Xenopus tropicalis</name>
    <name type="common">Western clawed frog</name>
    <name type="synonym">Silurana tropicalis</name>
    <dbReference type="NCBI Taxonomy" id="8364"/>
    <lineage>
        <taxon>Eukaryota</taxon>
        <taxon>Metazoa</taxon>
        <taxon>Chordata</taxon>
        <taxon>Craniata</taxon>
        <taxon>Vertebrata</taxon>
        <taxon>Euteleostomi</taxon>
        <taxon>Amphibia</taxon>
        <taxon>Batrachia</taxon>
        <taxon>Anura</taxon>
        <taxon>Pipoidea</taxon>
        <taxon>Pipidae</taxon>
        <taxon>Xenopodinae</taxon>
        <taxon>Xenopus</taxon>
        <taxon>Silurana</taxon>
    </lineage>
</organism>
<proteinExistence type="evidence at transcript level"/>